<comment type="catalytic activity">
    <reaction evidence="1">
        <text>5-amino-1-(5-phospho-D-ribosyl)imidazole-4-carboxylate + L-aspartate + ATP = (2S)-2-[5-amino-1-(5-phospho-beta-D-ribosyl)imidazole-4-carboxamido]succinate + ADP + phosphate + 2 H(+)</text>
        <dbReference type="Rhea" id="RHEA:22628"/>
        <dbReference type="ChEBI" id="CHEBI:15378"/>
        <dbReference type="ChEBI" id="CHEBI:29991"/>
        <dbReference type="ChEBI" id="CHEBI:30616"/>
        <dbReference type="ChEBI" id="CHEBI:43474"/>
        <dbReference type="ChEBI" id="CHEBI:58443"/>
        <dbReference type="ChEBI" id="CHEBI:77657"/>
        <dbReference type="ChEBI" id="CHEBI:456216"/>
        <dbReference type="EC" id="6.3.2.6"/>
    </reaction>
</comment>
<comment type="pathway">
    <text evidence="1">Purine metabolism; IMP biosynthesis via de novo pathway; 5-amino-1-(5-phospho-D-ribosyl)imidazole-4-carboxamide from 5-amino-1-(5-phospho-D-ribosyl)imidazole-4-carboxylate: step 1/2.</text>
</comment>
<comment type="similarity">
    <text evidence="1">Belongs to the SAICAR synthetase family.</text>
</comment>
<protein>
    <recommendedName>
        <fullName evidence="1">Phosphoribosylaminoimidazole-succinocarboxamide synthase</fullName>
        <ecNumber evidence="1">6.3.2.6</ecNumber>
    </recommendedName>
    <alternativeName>
        <fullName evidence="1">SAICAR synthetase</fullName>
    </alternativeName>
</protein>
<keyword id="KW-0067">ATP-binding</keyword>
<keyword id="KW-0436">Ligase</keyword>
<keyword id="KW-0547">Nucleotide-binding</keyword>
<keyword id="KW-0658">Purine biosynthesis</keyword>
<keyword id="KW-1185">Reference proteome</keyword>
<reference key="1">
    <citation type="journal article" date="2007" name="Nat. Biotechnol.">
        <title>Complete genome sequence of the fish pathogen Flavobacterium psychrophilum.</title>
        <authorList>
            <person name="Duchaud E."/>
            <person name="Boussaha M."/>
            <person name="Loux V."/>
            <person name="Bernardet J.-F."/>
            <person name="Michel C."/>
            <person name="Kerouault B."/>
            <person name="Mondot S."/>
            <person name="Nicolas P."/>
            <person name="Bossy R."/>
            <person name="Caron C."/>
            <person name="Bessieres P."/>
            <person name="Gibrat J.-F."/>
            <person name="Claverol S."/>
            <person name="Dumetz F."/>
            <person name="Le Henaff M."/>
            <person name="Benmansour A."/>
        </authorList>
    </citation>
    <scope>NUCLEOTIDE SEQUENCE [LARGE SCALE GENOMIC DNA]</scope>
    <source>
        <strain>ATCC 49511 / DSM 21280 / CIP 103535 / JIP02/86</strain>
    </source>
</reference>
<organism>
    <name type="scientific">Flavobacterium psychrophilum (strain ATCC 49511 / DSM 21280 / CIP 103535 / JIP02/86)</name>
    <dbReference type="NCBI Taxonomy" id="402612"/>
    <lineage>
        <taxon>Bacteria</taxon>
        <taxon>Pseudomonadati</taxon>
        <taxon>Bacteroidota</taxon>
        <taxon>Flavobacteriia</taxon>
        <taxon>Flavobacteriales</taxon>
        <taxon>Flavobacteriaceae</taxon>
        <taxon>Flavobacterium</taxon>
    </lineage>
</organism>
<gene>
    <name evidence="1" type="primary">purC</name>
    <name type="ordered locus">FP1079</name>
</gene>
<dbReference type="EC" id="6.3.2.6" evidence="1"/>
<dbReference type="EMBL" id="AM398681">
    <property type="protein sequence ID" value="CAL43167.1"/>
    <property type="molecule type" value="Genomic_DNA"/>
</dbReference>
<dbReference type="RefSeq" id="WP_011963218.1">
    <property type="nucleotide sequence ID" value="NC_009613.3"/>
</dbReference>
<dbReference type="RefSeq" id="YP_001295978.1">
    <property type="nucleotide sequence ID" value="NC_009613.3"/>
</dbReference>
<dbReference type="SMR" id="A6GYJ4"/>
<dbReference type="STRING" id="402612.FP1079"/>
<dbReference type="EnsemblBacteria" id="CAL43167">
    <property type="protein sequence ID" value="CAL43167"/>
    <property type="gene ID" value="FP1079"/>
</dbReference>
<dbReference type="KEGG" id="fps:FP1079"/>
<dbReference type="PATRIC" id="fig|402612.5.peg.1093"/>
<dbReference type="eggNOG" id="COG0152">
    <property type="taxonomic scope" value="Bacteria"/>
</dbReference>
<dbReference type="HOGENOM" id="CLU_045637_0_1_10"/>
<dbReference type="OrthoDB" id="9801549at2"/>
<dbReference type="UniPathway" id="UPA00074">
    <property type="reaction ID" value="UER00131"/>
</dbReference>
<dbReference type="Proteomes" id="UP000006394">
    <property type="component" value="Chromosome"/>
</dbReference>
<dbReference type="GO" id="GO:0005737">
    <property type="term" value="C:cytoplasm"/>
    <property type="evidence" value="ECO:0007669"/>
    <property type="project" value="TreeGrafter"/>
</dbReference>
<dbReference type="GO" id="GO:0005524">
    <property type="term" value="F:ATP binding"/>
    <property type="evidence" value="ECO:0007669"/>
    <property type="project" value="UniProtKB-KW"/>
</dbReference>
<dbReference type="GO" id="GO:0004639">
    <property type="term" value="F:phosphoribosylaminoimidazolesuccinocarboxamide synthase activity"/>
    <property type="evidence" value="ECO:0007669"/>
    <property type="project" value="UniProtKB-UniRule"/>
</dbReference>
<dbReference type="GO" id="GO:0006189">
    <property type="term" value="P:'de novo' IMP biosynthetic process"/>
    <property type="evidence" value="ECO:0007669"/>
    <property type="project" value="UniProtKB-UniRule"/>
</dbReference>
<dbReference type="CDD" id="cd01414">
    <property type="entry name" value="SAICAR_synt_Sc"/>
    <property type="match status" value="1"/>
</dbReference>
<dbReference type="FunFam" id="3.30.200.20:FF:000199">
    <property type="entry name" value="Phosphoribosylaminoimidazole-succinocarboxamide synthase"/>
    <property type="match status" value="1"/>
</dbReference>
<dbReference type="FunFam" id="3.30.470.20:FF:000015">
    <property type="entry name" value="Phosphoribosylaminoimidazole-succinocarboxamide synthase"/>
    <property type="match status" value="1"/>
</dbReference>
<dbReference type="Gene3D" id="3.30.470.20">
    <property type="entry name" value="ATP-grasp fold, B domain"/>
    <property type="match status" value="1"/>
</dbReference>
<dbReference type="Gene3D" id="3.30.200.20">
    <property type="entry name" value="Phosphorylase Kinase, domain 1"/>
    <property type="match status" value="1"/>
</dbReference>
<dbReference type="HAMAP" id="MF_00137">
    <property type="entry name" value="SAICAR_synth"/>
    <property type="match status" value="1"/>
</dbReference>
<dbReference type="InterPro" id="IPR028923">
    <property type="entry name" value="SAICAR_synt/ADE2_N"/>
</dbReference>
<dbReference type="InterPro" id="IPR018236">
    <property type="entry name" value="SAICAR_synthetase_CS"/>
</dbReference>
<dbReference type="NCBIfam" id="NF009251">
    <property type="entry name" value="PRK12607.1"/>
    <property type="match status" value="1"/>
</dbReference>
<dbReference type="NCBIfam" id="NF010568">
    <property type="entry name" value="PRK13961.1"/>
    <property type="match status" value="1"/>
</dbReference>
<dbReference type="PANTHER" id="PTHR43700">
    <property type="entry name" value="PHOSPHORIBOSYLAMINOIMIDAZOLE-SUCCINOCARBOXAMIDE SYNTHASE"/>
    <property type="match status" value="1"/>
</dbReference>
<dbReference type="PANTHER" id="PTHR43700:SF1">
    <property type="entry name" value="PHOSPHORIBOSYLAMINOIMIDAZOLE-SUCCINOCARBOXAMIDE SYNTHASE"/>
    <property type="match status" value="1"/>
</dbReference>
<dbReference type="Pfam" id="PF01259">
    <property type="entry name" value="SAICAR_synt"/>
    <property type="match status" value="1"/>
</dbReference>
<dbReference type="SUPFAM" id="SSF56104">
    <property type="entry name" value="SAICAR synthase-like"/>
    <property type="match status" value="1"/>
</dbReference>
<dbReference type="PROSITE" id="PS01058">
    <property type="entry name" value="SAICAR_SYNTHETASE_2"/>
    <property type="match status" value="1"/>
</dbReference>
<name>PUR7_FLAPJ</name>
<sequence>MNTITTTNFNFPNQKSVYRGKVREVYNINDELLVMVATDRLSAFDVVLPEGIPYKGQILNQIATKFMELTQDIVPNWLIATPDPNVAVGHLCEPFKVEMVIRGYLSGHAAREYALGKRTICGVTMPEGLKENDQFPTPIITPTTKADNGSHDEDISRSAILAKNIVSEQDYLVLEKYTRDLYQRGTEIAASRGLILVDTKYEFGKTKDGKIVLIDEIHTPDSSRYFYAEGYQDRQNNEEEQKQLSKEFVRRWLIENGFQGQDGQEIPEMNQEYITSVSERYIELYENILGEKFVKADISSINDRIEKNVLEYLQNK</sequence>
<accession>A6GYJ4</accession>
<proteinExistence type="inferred from homology"/>
<feature type="chain" id="PRO_1000018706" description="Phosphoribosylaminoimidazole-succinocarboxamide synthase">
    <location>
        <begin position="1"/>
        <end position="316"/>
    </location>
</feature>
<evidence type="ECO:0000255" key="1">
    <source>
        <dbReference type="HAMAP-Rule" id="MF_00137"/>
    </source>
</evidence>